<gene>
    <name type="primary">MT-ND4L</name>
    <name type="synonym">MTND4L</name>
    <name type="synonym">NADH4L</name>
    <name type="synonym">ND4L</name>
</gene>
<comment type="function">
    <text evidence="1">Core subunit of the mitochondrial membrane respiratory chain NADH dehydrogenase (Complex I) which catalyzes electron transfer from NADH through the respiratory chain, using ubiquinone as an electron acceptor. Part of the enzyme membrane arm which is embedded in the lipid bilayer and involved in proton translocation.</text>
</comment>
<comment type="catalytic activity">
    <reaction evidence="1">
        <text>a ubiquinone + NADH + 5 H(+)(in) = a ubiquinol + NAD(+) + 4 H(+)(out)</text>
        <dbReference type="Rhea" id="RHEA:29091"/>
        <dbReference type="Rhea" id="RHEA-COMP:9565"/>
        <dbReference type="Rhea" id="RHEA-COMP:9566"/>
        <dbReference type="ChEBI" id="CHEBI:15378"/>
        <dbReference type="ChEBI" id="CHEBI:16389"/>
        <dbReference type="ChEBI" id="CHEBI:17976"/>
        <dbReference type="ChEBI" id="CHEBI:57540"/>
        <dbReference type="ChEBI" id="CHEBI:57945"/>
        <dbReference type="EC" id="7.1.1.2"/>
    </reaction>
    <physiologicalReaction direction="left-to-right" evidence="1">
        <dbReference type="Rhea" id="RHEA:29092"/>
    </physiologicalReaction>
</comment>
<comment type="subunit">
    <text evidence="2">Core subunit of respiratory chain NADH dehydrogenase (Complex I) which is composed of 45 different subunits.</text>
</comment>
<comment type="subcellular location">
    <subcellularLocation>
        <location evidence="2">Mitochondrion inner membrane</location>
        <topology evidence="3">Multi-pass membrane protein</topology>
    </subcellularLocation>
</comment>
<comment type="similarity">
    <text evidence="4">Belongs to the complex I subunit 4L family.</text>
</comment>
<name>NU4LM_MOGWO</name>
<accession>Q7Y8E7</accession>
<protein>
    <recommendedName>
        <fullName>NADH-ubiquinone oxidoreductase chain 4L</fullName>
        <ecNumber>7.1.1.2</ecNumber>
    </recommendedName>
    <alternativeName>
        <fullName>NADH dehydrogenase subunit 4L</fullName>
    </alternativeName>
</protein>
<geneLocation type="mitochondrion"/>
<sequence>MSLVYMNIMIAFLTSLLGLLMYRSHLMSSLLCLEGMMLSLFILSTIMILNIHFTLASMIPIILLVFAACEAAIGLSLLVMVSNTYGVDYVQNLNLLQC</sequence>
<dbReference type="EC" id="7.1.1.2"/>
<dbReference type="EMBL" id="AB099482">
    <property type="protein sequence ID" value="BAC78869.1"/>
    <property type="molecule type" value="Genomic_DNA"/>
</dbReference>
<dbReference type="RefSeq" id="NP_871782.1">
    <property type="nucleotide sequence ID" value="NC_005035.1"/>
</dbReference>
<dbReference type="SMR" id="Q7Y8E7"/>
<dbReference type="GeneID" id="1446454"/>
<dbReference type="CTD" id="4539"/>
<dbReference type="GO" id="GO:0005743">
    <property type="term" value="C:mitochondrial inner membrane"/>
    <property type="evidence" value="ECO:0000250"/>
    <property type="project" value="UniProtKB"/>
</dbReference>
<dbReference type="GO" id="GO:0045271">
    <property type="term" value="C:respiratory chain complex I"/>
    <property type="evidence" value="ECO:0000250"/>
    <property type="project" value="UniProtKB"/>
</dbReference>
<dbReference type="GO" id="GO:0008137">
    <property type="term" value="F:NADH dehydrogenase (ubiquinone) activity"/>
    <property type="evidence" value="ECO:0000250"/>
    <property type="project" value="UniProtKB"/>
</dbReference>
<dbReference type="GO" id="GO:0042773">
    <property type="term" value="P:ATP synthesis coupled electron transport"/>
    <property type="evidence" value="ECO:0007669"/>
    <property type="project" value="InterPro"/>
</dbReference>
<dbReference type="FunFam" id="1.10.287.3510:FF:000002">
    <property type="entry name" value="NADH-ubiquinone oxidoreductase chain 4L"/>
    <property type="match status" value="1"/>
</dbReference>
<dbReference type="Gene3D" id="1.10.287.3510">
    <property type="match status" value="1"/>
</dbReference>
<dbReference type="InterPro" id="IPR001133">
    <property type="entry name" value="NADH_UbQ_OxRdtase_chain4L/K"/>
</dbReference>
<dbReference type="InterPro" id="IPR039428">
    <property type="entry name" value="NUOK/Mnh_C1-like"/>
</dbReference>
<dbReference type="PANTHER" id="PTHR11434:SF0">
    <property type="entry name" value="NADH-UBIQUINONE OXIDOREDUCTASE CHAIN 4L"/>
    <property type="match status" value="1"/>
</dbReference>
<dbReference type="PANTHER" id="PTHR11434">
    <property type="entry name" value="NADH-UBIQUINONE OXIDOREDUCTASE SUBUNIT ND4L"/>
    <property type="match status" value="1"/>
</dbReference>
<dbReference type="Pfam" id="PF00420">
    <property type="entry name" value="Oxidored_q2"/>
    <property type="match status" value="1"/>
</dbReference>
<organism>
    <name type="scientific">Mogera wogura</name>
    <name type="common">Japanese mole</name>
    <name type="synonym">Mogera kobeae</name>
    <dbReference type="NCBI Taxonomy" id="62295"/>
    <lineage>
        <taxon>Eukaryota</taxon>
        <taxon>Metazoa</taxon>
        <taxon>Chordata</taxon>
        <taxon>Craniata</taxon>
        <taxon>Vertebrata</taxon>
        <taxon>Euteleostomi</taxon>
        <taxon>Mammalia</taxon>
        <taxon>Eutheria</taxon>
        <taxon>Laurasiatheria</taxon>
        <taxon>Eulipotyphla</taxon>
        <taxon>Talpidae</taxon>
        <taxon>Mogera</taxon>
    </lineage>
</organism>
<keyword id="KW-0249">Electron transport</keyword>
<keyword id="KW-0472">Membrane</keyword>
<keyword id="KW-0496">Mitochondrion</keyword>
<keyword id="KW-0999">Mitochondrion inner membrane</keyword>
<keyword id="KW-0520">NAD</keyword>
<keyword id="KW-0679">Respiratory chain</keyword>
<keyword id="KW-1278">Translocase</keyword>
<keyword id="KW-0812">Transmembrane</keyword>
<keyword id="KW-1133">Transmembrane helix</keyword>
<keyword id="KW-0813">Transport</keyword>
<keyword id="KW-0830">Ubiquinone</keyword>
<proteinExistence type="inferred from homology"/>
<reference key="1">
    <citation type="journal article" date="2003" name="Mol. Phylogenet. Evol.">
        <title>Mitochondrial phylogeny of hedgehogs and monophyly of Eulipotyphla.</title>
        <authorList>
            <person name="Nikaido M."/>
            <person name="Cao Y."/>
            <person name="Harada M."/>
            <person name="Okada N."/>
            <person name="Hasegawa M."/>
        </authorList>
    </citation>
    <scope>NUCLEOTIDE SEQUENCE [GENOMIC DNA]</scope>
</reference>
<feature type="chain" id="PRO_0000275065" description="NADH-ubiquinone oxidoreductase chain 4L">
    <location>
        <begin position="1"/>
        <end position="98"/>
    </location>
</feature>
<feature type="transmembrane region" description="Helical" evidence="3">
    <location>
        <begin position="1"/>
        <end position="21"/>
    </location>
</feature>
<feature type="transmembrane region" description="Helical" evidence="3">
    <location>
        <begin position="29"/>
        <end position="49"/>
    </location>
</feature>
<feature type="transmembrane region" description="Helical" evidence="3">
    <location>
        <begin position="61"/>
        <end position="81"/>
    </location>
</feature>
<evidence type="ECO:0000250" key="1">
    <source>
        <dbReference type="UniProtKB" id="P03901"/>
    </source>
</evidence>
<evidence type="ECO:0000250" key="2">
    <source>
        <dbReference type="UniProtKB" id="P03902"/>
    </source>
</evidence>
<evidence type="ECO:0000255" key="3"/>
<evidence type="ECO:0000305" key="4"/>